<proteinExistence type="inferred from homology"/>
<protein>
    <recommendedName>
        <fullName evidence="1">Chaperonin GroEL 1</fullName>
        <ecNumber evidence="1">5.6.1.7</ecNumber>
    </recommendedName>
    <alternativeName>
        <fullName evidence="1">60 kDa chaperonin 1</fullName>
    </alternativeName>
    <alternativeName>
        <fullName evidence="1">Chaperonin-60 1</fullName>
        <shortName evidence="1">Cpn60 1</shortName>
    </alternativeName>
</protein>
<dbReference type="EC" id="5.6.1.7" evidence="1"/>
<dbReference type="EMBL" id="AP009044">
    <property type="protein sequence ID" value="BAF53687.1"/>
    <property type="molecule type" value="Genomic_DNA"/>
</dbReference>
<dbReference type="RefSeq" id="WP_011896815.1">
    <property type="nucleotide sequence ID" value="NC_009342.1"/>
</dbReference>
<dbReference type="SMR" id="A4QBU0"/>
<dbReference type="KEGG" id="cgt:cgR_0716"/>
<dbReference type="HOGENOM" id="CLU_016503_3_0_11"/>
<dbReference type="PhylomeDB" id="A4QBU0"/>
<dbReference type="Proteomes" id="UP000006698">
    <property type="component" value="Chromosome"/>
</dbReference>
<dbReference type="GO" id="GO:0005737">
    <property type="term" value="C:cytoplasm"/>
    <property type="evidence" value="ECO:0007669"/>
    <property type="project" value="UniProtKB-SubCell"/>
</dbReference>
<dbReference type="GO" id="GO:0005524">
    <property type="term" value="F:ATP binding"/>
    <property type="evidence" value="ECO:0007669"/>
    <property type="project" value="UniProtKB-UniRule"/>
</dbReference>
<dbReference type="GO" id="GO:0140662">
    <property type="term" value="F:ATP-dependent protein folding chaperone"/>
    <property type="evidence" value="ECO:0007669"/>
    <property type="project" value="InterPro"/>
</dbReference>
<dbReference type="GO" id="GO:0016853">
    <property type="term" value="F:isomerase activity"/>
    <property type="evidence" value="ECO:0007669"/>
    <property type="project" value="UniProtKB-KW"/>
</dbReference>
<dbReference type="GO" id="GO:0051082">
    <property type="term" value="F:unfolded protein binding"/>
    <property type="evidence" value="ECO:0007669"/>
    <property type="project" value="UniProtKB-UniRule"/>
</dbReference>
<dbReference type="GO" id="GO:0042026">
    <property type="term" value="P:protein refolding"/>
    <property type="evidence" value="ECO:0007669"/>
    <property type="project" value="UniProtKB-UniRule"/>
</dbReference>
<dbReference type="CDD" id="cd03344">
    <property type="entry name" value="GroEL"/>
    <property type="match status" value="1"/>
</dbReference>
<dbReference type="FunFam" id="3.50.7.10:FF:000001">
    <property type="entry name" value="60 kDa chaperonin"/>
    <property type="match status" value="1"/>
</dbReference>
<dbReference type="Gene3D" id="3.50.7.10">
    <property type="entry name" value="GroEL"/>
    <property type="match status" value="1"/>
</dbReference>
<dbReference type="Gene3D" id="1.10.560.10">
    <property type="entry name" value="GroEL-like equatorial domain"/>
    <property type="match status" value="1"/>
</dbReference>
<dbReference type="Gene3D" id="3.30.260.10">
    <property type="entry name" value="TCP-1-like chaperonin intermediate domain"/>
    <property type="match status" value="1"/>
</dbReference>
<dbReference type="HAMAP" id="MF_00600">
    <property type="entry name" value="CH60"/>
    <property type="match status" value="1"/>
</dbReference>
<dbReference type="InterPro" id="IPR018370">
    <property type="entry name" value="Chaperonin_Cpn60_CS"/>
</dbReference>
<dbReference type="InterPro" id="IPR001844">
    <property type="entry name" value="Cpn60/GroEL"/>
</dbReference>
<dbReference type="InterPro" id="IPR002423">
    <property type="entry name" value="Cpn60/GroEL/TCP-1"/>
</dbReference>
<dbReference type="InterPro" id="IPR027409">
    <property type="entry name" value="GroEL-like_apical_dom_sf"/>
</dbReference>
<dbReference type="InterPro" id="IPR027413">
    <property type="entry name" value="GROEL-like_equatorial_sf"/>
</dbReference>
<dbReference type="InterPro" id="IPR027410">
    <property type="entry name" value="TCP-1-like_intermed_sf"/>
</dbReference>
<dbReference type="NCBIfam" id="TIGR02348">
    <property type="entry name" value="GroEL"/>
    <property type="match status" value="1"/>
</dbReference>
<dbReference type="NCBIfam" id="NF000592">
    <property type="entry name" value="PRK00013.1"/>
    <property type="match status" value="1"/>
</dbReference>
<dbReference type="NCBIfam" id="NF009487">
    <property type="entry name" value="PRK12849.1"/>
    <property type="match status" value="1"/>
</dbReference>
<dbReference type="NCBIfam" id="NF009488">
    <property type="entry name" value="PRK12850.1"/>
    <property type="match status" value="1"/>
</dbReference>
<dbReference type="NCBIfam" id="NF009489">
    <property type="entry name" value="PRK12851.1"/>
    <property type="match status" value="1"/>
</dbReference>
<dbReference type="PANTHER" id="PTHR45633">
    <property type="entry name" value="60 KDA HEAT SHOCK PROTEIN, MITOCHONDRIAL"/>
    <property type="match status" value="1"/>
</dbReference>
<dbReference type="Pfam" id="PF00118">
    <property type="entry name" value="Cpn60_TCP1"/>
    <property type="match status" value="1"/>
</dbReference>
<dbReference type="PRINTS" id="PR00298">
    <property type="entry name" value="CHAPERONIN60"/>
</dbReference>
<dbReference type="SUPFAM" id="SSF52029">
    <property type="entry name" value="GroEL apical domain-like"/>
    <property type="match status" value="1"/>
</dbReference>
<dbReference type="SUPFAM" id="SSF48592">
    <property type="entry name" value="GroEL equatorial domain-like"/>
    <property type="match status" value="2"/>
</dbReference>
<dbReference type="PROSITE" id="PS00296">
    <property type="entry name" value="CHAPERONINS_CPN60"/>
    <property type="match status" value="1"/>
</dbReference>
<feature type="chain" id="PRO_0000331995" description="Chaperonin GroEL 1">
    <location>
        <begin position="1"/>
        <end position="538"/>
    </location>
</feature>
<feature type="binding site" evidence="1">
    <location>
        <begin position="29"/>
        <end position="32"/>
    </location>
    <ligand>
        <name>ATP</name>
        <dbReference type="ChEBI" id="CHEBI:30616"/>
    </ligand>
</feature>
<feature type="binding site" evidence="1">
    <location>
        <begin position="86"/>
        <end position="90"/>
    </location>
    <ligand>
        <name>ATP</name>
        <dbReference type="ChEBI" id="CHEBI:30616"/>
    </ligand>
</feature>
<feature type="binding site" evidence="1">
    <location>
        <position position="413"/>
    </location>
    <ligand>
        <name>ATP</name>
        <dbReference type="ChEBI" id="CHEBI:30616"/>
    </ligand>
</feature>
<feature type="binding site" evidence="1">
    <location>
        <begin position="478"/>
        <end position="480"/>
    </location>
    <ligand>
        <name>ATP</name>
        <dbReference type="ChEBI" id="CHEBI:30616"/>
    </ligand>
</feature>
<feature type="binding site" evidence="1">
    <location>
        <position position="494"/>
    </location>
    <ligand>
        <name>ATP</name>
        <dbReference type="ChEBI" id="CHEBI:30616"/>
    </ligand>
</feature>
<reference key="1">
    <citation type="journal article" date="2007" name="Microbiology">
        <title>Comparative analysis of the Corynebacterium glutamicum group and complete genome sequence of strain R.</title>
        <authorList>
            <person name="Yukawa H."/>
            <person name="Omumasaba C.A."/>
            <person name="Nonaka H."/>
            <person name="Kos P."/>
            <person name="Okai N."/>
            <person name="Suzuki N."/>
            <person name="Suda M."/>
            <person name="Tsuge Y."/>
            <person name="Watanabe J."/>
            <person name="Ikeda Y."/>
            <person name="Vertes A.A."/>
            <person name="Inui M."/>
        </authorList>
    </citation>
    <scope>NUCLEOTIDE SEQUENCE [LARGE SCALE GENOMIC DNA]</scope>
    <source>
        <strain>R</strain>
    </source>
</reference>
<gene>
    <name evidence="1" type="primary">groEL1</name>
    <name evidence="1" type="synonym">groL1</name>
    <name type="ordered locus">cgR_0716</name>
</gene>
<keyword id="KW-0067">ATP-binding</keyword>
<keyword id="KW-0143">Chaperone</keyword>
<keyword id="KW-0963">Cytoplasm</keyword>
<keyword id="KW-0413">Isomerase</keyword>
<keyword id="KW-0547">Nucleotide-binding</keyword>
<organism>
    <name type="scientific">Corynebacterium glutamicum (strain R)</name>
    <dbReference type="NCBI Taxonomy" id="340322"/>
    <lineage>
        <taxon>Bacteria</taxon>
        <taxon>Bacillati</taxon>
        <taxon>Actinomycetota</taxon>
        <taxon>Actinomycetes</taxon>
        <taxon>Mycobacteriales</taxon>
        <taxon>Corynebacteriaceae</taxon>
        <taxon>Corynebacterium</taxon>
    </lineage>
</organism>
<accession>A4QBU0</accession>
<comment type="function">
    <text evidence="1">Together with its co-chaperonin GroES, plays an essential role in assisting protein folding. The GroEL-GroES system forms a nano-cage that allows encapsulation of the non-native substrate proteins and provides a physical environment optimized to promote and accelerate protein folding.</text>
</comment>
<comment type="catalytic activity">
    <reaction evidence="1">
        <text>ATP + H2O + a folded polypeptide = ADP + phosphate + an unfolded polypeptide.</text>
        <dbReference type="EC" id="5.6.1.7"/>
    </reaction>
</comment>
<comment type="subunit">
    <text evidence="1">Forms a cylinder of 14 subunits composed of two heptameric rings stacked back-to-back. Interacts with the co-chaperonin GroES.</text>
</comment>
<comment type="subcellular location">
    <subcellularLocation>
        <location evidence="1">Cytoplasm</location>
    </subcellularLocation>
</comment>
<comment type="similarity">
    <text evidence="1">Belongs to the chaperonin (HSP60) family.</text>
</comment>
<evidence type="ECO:0000255" key="1">
    <source>
        <dbReference type="HAMAP-Rule" id="MF_00600"/>
    </source>
</evidence>
<sequence length="538" mass="56743">MAKLIAFDQDAREGILRGVDALANAVKVTLGPRGRNVVLDKAFGGPLVTNDGVTIARDIDLEDPFENLGAQLVKSVAVKTNDIAGDGTTTATLLAQALIAEGLRNVAAGANPMELNKGIAAAAEKTLEELKARATEVSDTKEIANVATVSSRDEVVGEIVAAAMEKVGKDGVVTVEESQSIETALEVTEGISFDKGYLSPYFINDNDTQQAVLDNPAVLLVRNKISSLPDFLPLLEKVVESNRPLLIIAEDVEGEPLQTLVVNSIRKTIKVVAVKSPYFGDRRKAFMDDLAIVTKATVVDPEVGINLNEAGEEVFGTARRITVSKDETVIVDGAGSAEEVEARRAQIRREIANTDSTWDREKAEERLAKLSGGIAVIRVGAATETEVNDRKLRVEDAINAARAAAQEGVIAGGGSALVQIAETLKAYAEEFEGDQKVGVRALATALGKPAYWIASNAGLDGSVVVARTAALPNGEGFNAATLEYGNLINDGVIDPVKVTHSAVVNATSVARMVLTTEASVVEKPAEEAADAHAGHHHH</sequence>
<name>CH601_CORGB</name>